<dbReference type="EC" id="2.1.3.2" evidence="1"/>
<dbReference type="EMBL" id="CP000422">
    <property type="protein sequence ID" value="ABJ67409.1"/>
    <property type="molecule type" value="Genomic_DNA"/>
</dbReference>
<dbReference type="RefSeq" id="WP_011672999.1">
    <property type="nucleotide sequence ID" value="NC_008525.1"/>
</dbReference>
<dbReference type="SMR" id="Q03HB3"/>
<dbReference type="STRING" id="278197.PEPE_0313"/>
<dbReference type="GeneID" id="33061327"/>
<dbReference type="KEGG" id="ppe:PEPE_0313"/>
<dbReference type="eggNOG" id="COG0540">
    <property type="taxonomic scope" value="Bacteria"/>
</dbReference>
<dbReference type="HOGENOM" id="CLU_043846_2_1_9"/>
<dbReference type="OrthoDB" id="9774690at2"/>
<dbReference type="UniPathway" id="UPA00070">
    <property type="reaction ID" value="UER00116"/>
</dbReference>
<dbReference type="Proteomes" id="UP000000773">
    <property type="component" value="Chromosome"/>
</dbReference>
<dbReference type="GO" id="GO:0005829">
    <property type="term" value="C:cytosol"/>
    <property type="evidence" value="ECO:0007669"/>
    <property type="project" value="TreeGrafter"/>
</dbReference>
<dbReference type="GO" id="GO:0016597">
    <property type="term" value="F:amino acid binding"/>
    <property type="evidence" value="ECO:0007669"/>
    <property type="project" value="InterPro"/>
</dbReference>
<dbReference type="GO" id="GO:0004070">
    <property type="term" value="F:aspartate carbamoyltransferase activity"/>
    <property type="evidence" value="ECO:0007669"/>
    <property type="project" value="UniProtKB-UniRule"/>
</dbReference>
<dbReference type="GO" id="GO:0006207">
    <property type="term" value="P:'de novo' pyrimidine nucleobase biosynthetic process"/>
    <property type="evidence" value="ECO:0007669"/>
    <property type="project" value="InterPro"/>
</dbReference>
<dbReference type="GO" id="GO:0044205">
    <property type="term" value="P:'de novo' UMP biosynthetic process"/>
    <property type="evidence" value="ECO:0007669"/>
    <property type="project" value="UniProtKB-UniRule"/>
</dbReference>
<dbReference type="GO" id="GO:0006520">
    <property type="term" value="P:amino acid metabolic process"/>
    <property type="evidence" value="ECO:0007669"/>
    <property type="project" value="InterPro"/>
</dbReference>
<dbReference type="FunFam" id="3.40.50.1370:FF:000011">
    <property type="entry name" value="Aspartate carbamoyltransferase"/>
    <property type="match status" value="1"/>
</dbReference>
<dbReference type="Gene3D" id="3.40.50.1370">
    <property type="entry name" value="Aspartate/ornithine carbamoyltransferase"/>
    <property type="match status" value="2"/>
</dbReference>
<dbReference type="HAMAP" id="MF_00001">
    <property type="entry name" value="Asp_carb_tr"/>
    <property type="match status" value="1"/>
</dbReference>
<dbReference type="InterPro" id="IPR006132">
    <property type="entry name" value="Asp/Orn_carbamoyltranf_P-bd"/>
</dbReference>
<dbReference type="InterPro" id="IPR006130">
    <property type="entry name" value="Asp/Orn_carbamoylTrfase"/>
</dbReference>
<dbReference type="InterPro" id="IPR036901">
    <property type="entry name" value="Asp/Orn_carbamoylTrfase_sf"/>
</dbReference>
<dbReference type="InterPro" id="IPR002082">
    <property type="entry name" value="Asp_carbamoyltransf"/>
</dbReference>
<dbReference type="InterPro" id="IPR006131">
    <property type="entry name" value="Asp_carbamoyltransf_Asp/Orn-bd"/>
</dbReference>
<dbReference type="NCBIfam" id="TIGR00670">
    <property type="entry name" value="asp_carb_tr"/>
    <property type="match status" value="1"/>
</dbReference>
<dbReference type="NCBIfam" id="NF002032">
    <property type="entry name" value="PRK00856.1"/>
    <property type="match status" value="1"/>
</dbReference>
<dbReference type="PANTHER" id="PTHR45753:SF6">
    <property type="entry name" value="ASPARTATE CARBAMOYLTRANSFERASE"/>
    <property type="match status" value="1"/>
</dbReference>
<dbReference type="PANTHER" id="PTHR45753">
    <property type="entry name" value="ORNITHINE CARBAMOYLTRANSFERASE, MITOCHONDRIAL"/>
    <property type="match status" value="1"/>
</dbReference>
<dbReference type="Pfam" id="PF00185">
    <property type="entry name" value="OTCace"/>
    <property type="match status" value="1"/>
</dbReference>
<dbReference type="Pfam" id="PF02729">
    <property type="entry name" value="OTCace_N"/>
    <property type="match status" value="1"/>
</dbReference>
<dbReference type="PRINTS" id="PR00100">
    <property type="entry name" value="AOTCASE"/>
</dbReference>
<dbReference type="PRINTS" id="PR00101">
    <property type="entry name" value="ATCASE"/>
</dbReference>
<dbReference type="SUPFAM" id="SSF53671">
    <property type="entry name" value="Aspartate/ornithine carbamoyltransferase"/>
    <property type="match status" value="1"/>
</dbReference>
<dbReference type="PROSITE" id="PS00097">
    <property type="entry name" value="CARBAMOYLTRANSFERASE"/>
    <property type="match status" value="1"/>
</dbReference>
<protein>
    <recommendedName>
        <fullName evidence="1">Aspartate carbamoyltransferase catalytic subunit</fullName>
        <ecNumber evidence="1">2.1.3.2</ecNumber>
    </recommendedName>
    <alternativeName>
        <fullName evidence="1">Aspartate transcarbamylase</fullName>
        <shortName evidence="1">ATCase</shortName>
    </alternativeName>
</protein>
<keyword id="KW-0665">Pyrimidine biosynthesis</keyword>
<keyword id="KW-0808">Transferase</keyword>
<organism>
    <name type="scientific">Pediococcus pentosaceus (strain ATCC 25745 / CCUG 21536 / LMG 10740 / 183-1w)</name>
    <dbReference type="NCBI Taxonomy" id="278197"/>
    <lineage>
        <taxon>Bacteria</taxon>
        <taxon>Bacillati</taxon>
        <taxon>Bacillota</taxon>
        <taxon>Bacilli</taxon>
        <taxon>Lactobacillales</taxon>
        <taxon>Lactobacillaceae</taxon>
        <taxon>Pediococcus</taxon>
    </lineage>
</organism>
<proteinExistence type="inferred from homology"/>
<accession>Q03HB3</accession>
<gene>
    <name evidence="1" type="primary">pyrB</name>
    <name type="ordered locus">PEPE_0313</name>
</gene>
<reference key="1">
    <citation type="journal article" date="2006" name="Proc. Natl. Acad. Sci. U.S.A.">
        <title>Comparative genomics of the lactic acid bacteria.</title>
        <authorList>
            <person name="Makarova K.S."/>
            <person name="Slesarev A."/>
            <person name="Wolf Y.I."/>
            <person name="Sorokin A."/>
            <person name="Mirkin B."/>
            <person name="Koonin E.V."/>
            <person name="Pavlov A."/>
            <person name="Pavlova N."/>
            <person name="Karamychev V."/>
            <person name="Polouchine N."/>
            <person name="Shakhova V."/>
            <person name="Grigoriev I."/>
            <person name="Lou Y."/>
            <person name="Rohksar D."/>
            <person name="Lucas S."/>
            <person name="Huang K."/>
            <person name="Goodstein D.M."/>
            <person name="Hawkins T."/>
            <person name="Plengvidhya V."/>
            <person name="Welker D."/>
            <person name="Hughes J."/>
            <person name="Goh Y."/>
            <person name="Benson A."/>
            <person name="Baldwin K."/>
            <person name="Lee J.-H."/>
            <person name="Diaz-Muniz I."/>
            <person name="Dosti B."/>
            <person name="Smeianov V."/>
            <person name="Wechter W."/>
            <person name="Barabote R."/>
            <person name="Lorca G."/>
            <person name="Altermann E."/>
            <person name="Barrangou R."/>
            <person name="Ganesan B."/>
            <person name="Xie Y."/>
            <person name="Rawsthorne H."/>
            <person name="Tamir D."/>
            <person name="Parker C."/>
            <person name="Breidt F."/>
            <person name="Broadbent J.R."/>
            <person name="Hutkins R."/>
            <person name="O'Sullivan D."/>
            <person name="Steele J."/>
            <person name="Unlu G."/>
            <person name="Saier M.H. Jr."/>
            <person name="Klaenhammer T."/>
            <person name="Richardson P."/>
            <person name="Kozyavkin S."/>
            <person name="Weimer B.C."/>
            <person name="Mills D.A."/>
        </authorList>
    </citation>
    <scope>NUCLEOTIDE SEQUENCE [LARGE SCALE GENOMIC DNA]</scope>
    <source>
        <strain>ATCC 25745 / CCUG 21536 / LMG 10740 / 183-1w</strain>
    </source>
</reference>
<evidence type="ECO:0000255" key="1">
    <source>
        <dbReference type="HAMAP-Rule" id="MF_00001"/>
    </source>
</evidence>
<sequence length="308" mass="34828">MNMHDLTTVESFSEEDVLHKIRLAEEFKNGKTIELTRPVYAMNLFFENSTRTHTSFEMAESRLGMRLLEFEAKTSSVTKGESLLDTVKTIDAIQTDIAVIRHPQNDYYKQLLEADLNISIVNGGDGSGQHPSQSLLDMMTIYQEFNHFDGLKIAIAGDIAHSRVARSNAMLLNKLGAEVYFAGPEAWMAEDLKAYGTFLPIDELVEKVDVMMLLRIQNERISQDTAIKFEPHEYLQEYGLTFERADRMQPTAIIMHPAPVNRGTEIESSLVDGEKSRIFKQMTNGMYMRMAILTDVLEAKGLIKGGLH</sequence>
<feature type="chain" id="PRO_0000321131" description="Aspartate carbamoyltransferase catalytic subunit">
    <location>
        <begin position="1"/>
        <end position="308"/>
    </location>
</feature>
<feature type="binding site" evidence="1">
    <location>
        <position position="51"/>
    </location>
    <ligand>
        <name>carbamoyl phosphate</name>
        <dbReference type="ChEBI" id="CHEBI:58228"/>
    </ligand>
</feature>
<feature type="binding site" evidence="1">
    <location>
        <position position="52"/>
    </location>
    <ligand>
        <name>carbamoyl phosphate</name>
        <dbReference type="ChEBI" id="CHEBI:58228"/>
    </ligand>
</feature>
<feature type="binding site" evidence="1">
    <location>
        <position position="79"/>
    </location>
    <ligand>
        <name>L-aspartate</name>
        <dbReference type="ChEBI" id="CHEBI:29991"/>
    </ligand>
</feature>
<feature type="binding site" evidence="1">
    <location>
        <position position="101"/>
    </location>
    <ligand>
        <name>carbamoyl phosphate</name>
        <dbReference type="ChEBI" id="CHEBI:58228"/>
    </ligand>
</feature>
<feature type="binding site" evidence="1">
    <location>
        <position position="130"/>
    </location>
    <ligand>
        <name>carbamoyl phosphate</name>
        <dbReference type="ChEBI" id="CHEBI:58228"/>
    </ligand>
</feature>
<feature type="binding site" evidence="1">
    <location>
        <position position="133"/>
    </location>
    <ligand>
        <name>carbamoyl phosphate</name>
        <dbReference type="ChEBI" id="CHEBI:58228"/>
    </ligand>
</feature>
<feature type="binding site" evidence="1">
    <location>
        <position position="163"/>
    </location>
    <ligand>
        <name>L-aspartate</name>
        <dbReference type="ChEBI" id="CHEBI:29991"/>
    </ligand>
</feature>
<feature type="binding site" evidence="1">
    <location>
        <position position="215"/>
    </location>
    <ligand>
        <name>L-aspartate</name>
        <dbReference type="ChEBI" id="CHEBI:29991"/>
    </ligand>
</feature>
<feature type="binding site" evidence="1">
    <location>
        <position position="258"/>
    </location>
    <ligand>
        <name>carbamoyl phosphate</name>
        <dbReference type="ChEBI" id="CHEBI:58228"/>
    </ligand>
</feature>
<feature type="binding site" evidence="1">
    <location>
        <position position="259"/>
    </location>
    <ligand>
        <name>carbamoyl phosphate</name>
        <dbReference type="ChEBI" id="CHEBI:58228"/>
    </ligand>
</feature>
<name>PYRB_PEDPA</name>
<comment type="function">
    <text evidence="1">Catalyzes the condensation of carbamoyl phosphate and aspartate to form carbamoyl aspartate and inorganic phosphate, the committed step in the de novo pyrimidine nucleotide biosynthesis pathway.</text>
</comment>
<comment type="catalytic activity">
    <reaction evidence="1">
        <text>carbamoyl phosphate + L-aspartate = N-carbamoyl-L-aspartate + phosphate + H(+)</text>
        <dbReference type="Rhea" id="RHEA:20013"/>
        <dbReference type="ChEBI" id="CHEBI:15378"/>
        <dbReference type="ChEBI" id="CHEBI:29991"/>
        <dbReference type="ChEBI" id="CHEBI:32814"/>
        <dbReference type="ChEBI" id="CHEBI:43474"/>
        <dbReference type="ChEBI" id="CHEBI:58228"/>
        <dbReference type="EC" id="2.1.3.2"/>
    </reaction>
</comment>
<comment type="pathway">
    <text evidence="1">Pyrimidine metabolism; UMP biosynthesis via de novo pathway; (S)-dihydroorotate from bicarbonate: step 2/3.</text>
</comment>
<comment type="subunit">
    <text evidence="1">Heterododecamer (2C3:3R2) of six catalytic PyrB chains organized as two trimers (C3), and six regulatory PyrI chains organized as three dimers (R2).</text>
</comment>
<comment type="similarity">
    <text evidence="1">Belongs to the aspartate/ornithine carbamoyltransferase superfamily. ATCase family.</text>
</comment>